<gene>
    <name evidence="1" type="primary">metN</name>
    <name type="ordered locus">spyM18_0315</name>
</gene>
<accession>Q8P2K6</accession>
<feature type="chain" id="PRO_0000270420" description="Methionine import ATP-binding protein MetN">
    <location>
        <begin position="1"/>
        <end position="354"/>
    </location>
</feature>
<feature type="domain" description="ABC transporter" evidence="1">
    <location>
        <begin position="8"/>
        <end position="250"/>
    </location>
</feature>
<feature type="binding site" evidence="1">
    <location>
        <begin position="42"/>
        <end position="49"/>
    </location>
    <ligand>
        <name>ATP</name>
        <dbReference type="ChEBI" id="CHEBI:30616"/>
    </ligand>
</feature>
<reference key="1">
    <citation type="journal article" date="2002" name="Proc. Natl. Acad. Sci. U.S.A.">
        <title>Genome sequence and comparative microarray analysis of serotype M18 group A Streptococcus strains associated with acute rheumatic fever outbreaks.</title>
        <authorList>
            <person name="Smoot J.C."/>
            <person name="Barbian K.D."/>
            <person name="Van Gompel J.J."/>
            <person name="Smoot L.M."/>
            <person name="Chaussee M.S."/>
            <person name="Sylva G.L."/>
            <person name="Sturdevant D.E."/>
            <person name="Ricklefs S.M."/>
            <person name="Porcella S.F."/>
            <person name="Parkins L.D."/>
            <person name="Beres S.B."/>
            <person name="Campbell D.S."/>
            <person name="Smith T.M."/>
            <person name="Zhang Q."/>
            <person name="Kapur V."/>
            <person name="Daly J.A."/>
            <person name="Veasy L.G."/>
            <person name="Musser J.M."/>
        </authorList>
    </citation>
    <scope>NUCLEOTIDE SEQUENCE [LARGE SCALE GENOMIC DNA]</scope>
    <source>
        <strain>MGAS8232</strain>
    </source>
</reference>
<name>METN_STRP8</name>
<keyword id="KW-0029">Amino-acid transport</keyword>
<keyword id="KW-0067">ATP-binding</keyword>
<keyword id="KW-1003">Cell membrane</keyword>
<keyword id="KW-0472">Membrane</keyword>
<keyword id="KW-0547">Nucleotide-binding</keyword>
<keyword id="KW-1278">Translocase</keyword>
<keyword id="KW-0813">Transport</keyword>
<organism>
    <name type="scientific">Streptococcus pyogenes serotype M18 (strain MGAS8232)</name>
    <dbReference type="NCBI Taxonomy" id="186103"/>
    <lineage>
        <taxon>Bacteria</taxon>
        <taxon>Bacillati</taxon>
        <taxon>Bacillota</taxon>
        <taxon>Bacilli</taxon>
        <taxon>Lactobacillales</taxon>
        <taxon>Streptococcaceae</taxon>
        <taxon>Streptococcus</taxon>
    </lineage>
</organism>
<proteinExistence type="inferred from homology"/>
<evidence type="ECO:0000255" key="1">
    <source>
        <dbReference type="HAMAP-Rule" id="MF_01719"/>
    </source>
</evidence>
<dbReference type="EC" id="7.4.2.11" evidence="1"/>
<dbReference type="EMBL" id="AE009949">
    <property type="protein sequence ID" value="AAL97073.1"/>
    <property type="molecule type" value="Genomic_DNA"/>
</dbReference>
<dbReference type="RefSeq" id="WP_011017342.1">
    <property type="nucleotide sequence ID" value="NC_003485.1"/>
</dbReference>
<dbReference type="SMR" id="Q8P2K6"/>
<dbReference type="KEGG" id="spm:spyM18_0315"/>
<dbReference type="HOGENOM" id="CLU_000604_1_3_9"/>
<dbReference type="GO" id="GO:0005886">
    <property type="term" value="C:plasma membrane"/>
    <property type="evidence" value="ECO:0007669"/>
    <property type="project" value="UniProtKB-SubCell"/>
</dbReference>
<dbReference type="GO" id="GO:0033232">
    <property type="term" value="F:ABC-type D-methionine transporter activity"/>
    <property type="evidence" value="ECO:0007669"/>
    <property type="project" value="UniProtKB-EC"/>
</dbReference>
<dbReference type="GO" id="GO:0005524">
    <property type="term" value="F:ATP binding"/>
    <property type="evidence" value="ECO:0007669"/>
    <property type="project" value="UniProtKB-KW"/>
</dbReference>
<dbReference type="GO" id="GO:0016887">
    <property type="term" value="F:ATP hydrolysis activity"/>
    <property type="evidence" value="ECO:0007669"/>
    <property type="project" value="InterPro"/>
</dbReference>
<dbReference type="CDD" id="cd03258">
    <property type="entry name" value="ABC_MetN_methionine_transporter"/>
    <property type="match status" value="1"/>
</dbReference>
<dbReference type="Gene3D" id="3.30.70.260">
    <property type="match status" value="1"/>
</dbReference>
<dbReference type="Gene3D" id="3.40.50.300">
    <property type="entry name" value="P-loop containing nucleotide triphosphate hydrolases"/>
    <property type="match status" value="1"/>
</dbReference>
<dbReference type="InterPro" id="IPR003593">
    <property type="entry name" value="AAA+_ATPase"/>
</dbReference>
<dbReference type="InterPro" id="IPR003439">
    <property type="entry name" value="ABC_transporter-like_ATP-bd"/>
</dbReference>
<dbReference type="InterPro" id="IPR017871">
    <property type="entry name" value="ABC_transporter-like_CS"/>
</dbReference>
<dbReference type="InterPro" id="IPR045865">
    <property type="entry name" value="ACT-like_dom_sf"/>
</dbReference>
<dbReference type="InterPro" id="IPR041701">
    <property type="entry name" value="MetN_ABC"/>
</dbReference>
<dbReference type="InterPro" id="IPR050086">
    <property type="entry name" value="MetN_ABC_transporter-like"/>
</dbReference>
<dbReference type="InterPro" id="IPR018449">
    <property type="entry name" value="NIL_domain"/>
</dbReference>
<dbReference type="InterPro" id="IPR027417">
    <property type="entry name" value="P-loop_NTPase"/>
</dbReference>
<dbReference type="PANTHER" id="PTHR43166">
    <property type="entry name" value="AMINO ACID IMPORT ATP-BINDING PROTEIN"/>
    <property type="match status" value="1"/>
</dbReference>
<dbReference type="PANTHER" id="PTHR43166:SF30">
    <property type="entry name" value="METHIONINE IMPORT ATP-BINDING PROTEIN METN"/>
    <property type="match status" value="1"/>
</dbReference>
<dbReference type="Pfam" id="PF00005">
    <property type="entry name" value="ABC_tran"/>
    <property type="match status" value="1"/>
</dbReference>
<dbReference type="Pfam" id="PF09383">
    <property type="entry name" value="NIL"/>
    <property type="match status" value="1"/>
</dbReference>
<dbReference type="SMART" id="SM00382">
    <property type="entry name" value="AAA"/>
    <property type="match status" value="1"/>
</dbReference>
<dbReference type="SMART" id="SM00930">
    <property type="entry name" value="NIL"/>
    <property type="match status" value="1"/>
</dbReference>
<dbReference type="SUPFAM" id="SSF55021">
    <property type="entry name" value="ACT-like"/>
    <property type="match status" value="1"/>
</dbReference>
<dbReference type="SUPFAM" id="SSF52540">
    <property type="entry name" value="P-loop containing nucleoside triphosphate hydrolases"/>
    <property type="match status" value="1"/>
</dbReference>
<dbReference type="PROSITE" id="PS00211">
    <property type="entry name" value="ABC_TRANSPORTER_1"/>
    <property type="match status" value="1"/>
</dbReference>
<dbReference type="PROSITE" id="PS50893">
    <property type="entry name" value="ABC_TRANSPORTER_2"/>
    <property type="match status" value="1"/>
</dbReference>
<dbReference type="PROSITE" id="PS51264">
    <property type="entry name" value="METN"/>
    <property type="match status" value="1"/>
</dbReference>
<sequence>MNEAIIQLDHIDITFRQKKRVIEAVKDVTVHINQGDIYGIVGYSGAGKSTLVRVINLLQAPTNGKITVDGDVTFDQGKIQLSANALRQKRRDTGMIFQHFNLMAQKTAKENVAFALRHSSLSKTEKEHKVIELLELVGLSERADNYPAQLSGGQKQRVAIARALANDPKILISDEATSALDPKTTKQILALLQELNRKLGLTIVMITHEMQIVKDICNRVAVMQNGVLIEEGSVLDIFSNPKEALTQKFITTATGIDEALEKINQQDIVKHLPANALLAQLKYAGTSTDEPLLNSIYRQFEVTANILYGNIEILDHIPVGDMIVVLEGQAENILAAEKALHEAGVDVSILKRGA</sequence>
<comment type="function">
    <text evidence="1">Part of the ABC transporter complex MetNIQ involved in methionine import. Responsible for energy coupling to the transport system.</text>
</comment>
<comment type="catalytic activity">
    <reaction evidence="1">
        <text>L-methionine(out) + ATP + H2O = L-methionine(in) + ADP + phosphate + H(+)</text>
        <dbReference type="Rhea" id="RHEA:29779"/>
        <dbReference type="ChEBI" id="CHEBI:15377"/>
        <dbReference type="ChEBI" id="CHEBI:15378"/>
        <dbReference type="ChEBI" id="CHEBI:30616"/>
        <dbReference type="ChEBI" id="CHEBI:43474"/>
        <dbReference type="ChEBI" id="CHEBI:57844"/>
        <dbReference type="ChEBI" id="CHEBI:456216"/>
        <dbReference type="EC" id="7.4.2.11"/>
    </reaction>
</comment>
<comment type="catalytic activity">
    <reaction evidence="1">
        <text>D-methionine(out) + ATP + H2O = D-methionine(in) + ADP + phosphate + H(+)</text>
        <dbReference type="Rhea" id="RHEA:29767"/>
        <dbReference type="ChEBI" id="CHEBI:15377"/>
        <dbReference type="ChEBI" id="CHEBI:15378"/>
        <dbReference type="ChEBI" id="CHEBI:30616"/>
        <dbReference type="ChEBI" id="CHEBI:43474"/>
        <dbReference type="ChEBI" id="CHEBI:57932"/>
        <dbReference type="ChEBI" id="CHEBI:456216"/>
        <dbReference type="EC" id="7.4.2.11"/>
    </reaction>
</comment>
<comment type="subunit">
    <text evidence="1">The complex is composed of two ATP-binding proteins (MetN), two transmembrane proteins (MetI) and a solute-binding protein (MetQ).</text>
</comment>
<comment type="subcellular location">
    <subcellularLocation>
        <location evidence="1">Cell membrane</location>
        <topology evidence="1">Peripheral membrane protein</topology>
    </subcellularLocation>
</comment>
<comment type="similarity">
    <text evidence="1">Belongs to the ABC transporter superfamily. Methionine importer (TC 3.A.1.24) family.</text>
</comment>
<protein>
    <recommendedName>
        <fullName evidence="1">Methionine import ATP-binding protein MetN</fullName>
        <ecNumber evidence="1">7.4.2.11</ecNumber>
    </recommendedName>
</protein>